<comment type="function">
    <text evidence="1">Catalyzes the phosphorylation of the 3'-hydroxyl group of dephosphocoenzyme A to form coenzyme A.</text>
</comment>
<comment type="catalytic activity">
    <reaction evidence="1">
        <text>3'-dephospho-CoA + ATP = ADP + CoA + H(+)</text>
        <dbReference type="Rhea" id="RHEA:18245"/>
        <dbReference type="ChEBI" id="CHEBI:15378"/>
        <dbReference type="ChEBI" id="CHEBI:30616"/>
        <dbReference type="ChEBI" id="CHEBI:57287"/>
        <dbReference type="ChEBI" id="CHEBI:57328"/>
        <dbReference type="ChEBI" id="CHEBI:456216"/>
        <dbReference type="EC" id="2.7.1.24"/>
    </reaction>
</comment>
<comment type="pathway">
    <text evidence="1">Cofactor biosynthesis; coenzyme A biosynthesis; CoA from (R)-pantothenate: step 5/5.</text>
</comment>
<comment type="subcellular location">
    <subcellularLocation>
        <location evidence="1">Cytoplasm</location>
    </subcellularLocation>
</comment>
<comment type="similarity">
    <text evidence="1">Belongs to the CoaE family.</text>
</comment>
<organism>
    <name type="scientific">Colwellia psychrerythraea (strain 34H / ATCC BAA-681)</name>
    <name type="common">Vibrio psychroerythus</name>
    <dbReference type="NCBI Taxonomy" id="167879"/>
    <lineage>
        <taxon>Bacteria</taxon>
        <taxon>Pseudomonadati</taxon>
        <taxon>Pseudomonadota</taxon>
        <taxon>Gammaproteobacteria</taxon>
        <taxon>Alteromonadales</taxon>
        <taxon>Colwelliaceae</taxon>
        <taxon>Colwellia</taxon>
    </lineage>
</organism>
<evidence type="ECO:0000255" key="1">
    <source>
        <dbReference type="HAMAP-Rule" id="MF_00376"/>
    </source>
</evidence>
<gene>
    <name evidence="1" type="primary">coaE</name>
    <name type="ordered locus">CPS_4450</name>
</gene>
<proteinExistence type="inferred from homology"/>
<feature type="chain" id="PRO_0000243277" description="Dephospho-CoA kinase">
    <location>
        <begin position="1"/>
        <end position="202"/>
    </location>
</feature>
<feature type="domain" description="DPCK" evidence="1">
    <location>
        <begin position="5"/>
        <end position="202"/>
    </location>
</feature>
<feature type="binding site" evidence="1">
    <location>
        <begin position="13"/>
        <end position="18"/>
    </location>
    <ligand>
        <name>ATP</name>
        <dbReference type="ChEBI" id="CHEBI:30616"/>
    </ligand>
</feature>
<dbReference type="EC" id="2.7.1.24" evidence="1"/>
<dbReference type="EMBL" id="CP000083">
    <property type="protein sequence ID" value="AAZ26036.1"/>
    <property type="molecule type" value="Genomic_DNA"/>
</dbReference>
<dbReference type="RefSeq" id="WP_011045179.1">
    <property type="nucleotide sequence ID" value="NC_003910.7"/>
</dbReference>
<dbReference type="SMR" id="Q47VS4"/>
<dbReference type="STRING" id="167879.CPS_4450"/>
<dbReference type="KEGG" id="cps:CPS_4450"/>
<dbReference type="HOGENOM" id="CLU_057180_1_2_6"/>
<dbReference type="UniPathway" id="UPA00241">
    <property type="reaction ID" value="UER00356"/>
</dbReference>
<dbReference type="Proteomes" id="UP000000547">
    <property type="component" value="Chromosome"/>
</dbReference>
<dbReference type="GO" id="GO:0005737">
    <property type="term" value="C:cytoplasm"/>
    <property type="evidence" value="ECO:0007669"/>
    <property type="project" value="UniProtKB-SubCell"/>
</dbReference>
<dbReference type="GO" id="GO:0005524">
    <property type="term" value="F:ATP binding"/>
    <property type="evidence" value="ECO:0007669"/>
    <property type="project" value="UniProtKB-UniRule"/>
</dbReference>
<dbReference type="GO" id="GO:0004140">
    <property type="term" value="F:dephospho-CoA kinase activity"/>
    <property type="evidence" value="ECO:0007669"/>
    <property type="project" value="UniProtKB-UniRule"/>
</dbReference>
<dbReference type="GO" id="GO:0015937">
    <property type="term" value="P:coenzyme A biosynthetic process"/>
    <property type="evidence" value="ECO:0007669"/>
    <property type="project" value="UniProtKB-UniRule"/>
</dbReference>
<dbReference type="CDD" id="cd02022">
    <property type="entry name" value="DPCK"/>
    <property type="match status" value="1"/>
</dbReference>
<dbReference type="Gene3D" id="3.40.50.300">
    <property type="entry name" value="P-loop containing nucleotide triphosphate hydrolases"/>
    <property type="match status" value="1"/>
</dbReference>
<dbReference type="HAMAP" id="MF_00376">
    <property type="entry name" value="Dephospho_CoA_kinase"/>
    <property type="match status" value="1"/>
</dbReference>
<dbReference type="InterPro" id="IPR001977">
    <property type="entry name" value="Depp_CoAkinase"/>
</dbReference>
<dbReference type="InterPro" id="IPR027417">
    <property type="entry name" value="P-loop_NTPase"/>
</dbReference>
<dbReference type="NCBIfam" id="TIGR00152">
    <property type="entry name" value="dephospho-CoA kinase"/>
    <property type="match status" value="1"/>
</dbReference>
<dbReference type="PANTHER" id="PTHR10695:SF46">
    <property type="entry name" value="BIFUNCTIONAL COENZYME A SYNTHASE-RELATED"/>
    <property type="match status" value="1"/>
</dbReference>
<dbReference type="PANTHER" id="PTHR10695">
    <property type="entry name" value="DEPHOSPHO-COA KINASE-RELATED"/>
    <property type="match status" value="1"/>
</dbReference>
<dbReference type="Pfam" id="PF01121">
    <property type="entry name" value="CoaE"/>
    <property type="match status" value="1"/>
</dbReference>
<dbReference type="SUPFAM" id="SSF52540">
    <property type="entry name" value="P-loop containing nucleoside triphosphate hydrolases"/>
    <property type="match status" value="1"/>
</dbReference>
<dbReference type="PROSITE" id="PS51219">
    <property type="entry name" value="DPCK"/>
    <property type="match status" value="1"/>
</dbReference>
<keyword id="KW-0067">ATP-binding</keyword>
<keyword id="KW-0173">Coenzyme A biosynthesis</keyword>
<keyword id="KW-0963">Cytoplasm</keyword>
<keyword id="KW-0418">Kinase</keyword>
<keyword id="KW-0547">Nucleotide-binding</keyword>
<keyword id="KW-0808">Transferase</keyword>
<reference key="1">
    <citation type="journal article" date="2005" name="Proc. Natl. Acad. Sci. U.S.A.">
        <title>The psychrophilic lifestyle as revealed by the genome sequence of Colwellia psychrerythraea 34H through genomic and proteomic analyses.</title>
        <authorList>
            <person name="Methe B.A."/>
            <person name="Nelson K.E."/>
            <person name="Deming J.W."/>
            <person name="Momen B."/>
            <person name="Melamud E."/>
            <person name="Zhang X."/>
            <person name="Moult J."/>
            <person name="Madupu R."/>
            <person name="Nelson W.C."/>
            <person name="Dodson R.J."/>
            <person name="Brinkac L.M."/>
            <person name="Daugherty S.C."/>
            <person name="Durkin A.S."/>
            <person name="DeBoy R.T."/>
            <person name="Kolonay J.F."/>
            <person name="Sullivan S.A."/>
            <person name="Zhou L."/>
            <person name="Davidsen T.M."/>
            <person name="Wu M."/>
            <person name="Huston A.L."/>
            <person name="Lewis M."/>
            <person name="Weaver B."/>
            <person name="Weidman J.F."/>
            <person name="Khouri H."/>
            <person name="Utterback T.R."/>
            <person name="Feldblyum T.V."/>
            <person name="Fraser C.M."/>
        </authorList>
    </citation>
    <scope>NUCLEOTIDE SEQUENCE [LARGE SCALE GENOMIC DNA]</scope>
    <source>
        <strain>34H / ATCC BAA-681</strain>
    </source>
</reference>
<name>COAE_COLP3</name>
<accession>Q47VS4</accession>
<protein>
    <recommendedName>
        <fullName evidence="1">Dephospho-CoA kinase</fullName>
        <ecNumber evidence="1">2.7.1.24</ecNumber>
    </recommendedName>
    <alternativeName>
        <fullName evidence="1">Dephosphocoenzyme A kinase</fullName>
    </alternativeName>
</protein>
<sequence length="202" mass="22260">MSKLVIGLTGGIGSGKTTITNYFLALGVEIIDADIIAREVVAINSPALKAIAKHFGDDYIQADGQLNRPLLRNRIFSNKADKLWLNKLLHPLIRVNIVTQTKEAKSPYCILVAPLLIENNLLELVDRVLIVDVNESTQITRTLVRDSSSEQEIKAIIASQTSRAARVNVADDIINNDDSPLSEIKEAVLSLDKKYLTLTKMV</sequence>